<gene>
    <name evidence="1" type="primary">tpiA</name>
    <name type="ordered locus">MTH_1041</name>
</gene>
<proteinExistence type="inferred from homology"/>
<comment type="function">
    <text evidence="1">Involved in the gluconeogenesis. Catalyzes stereospecifically the conversion of dihydroxyacetone phosphate (DHAP) to D-glyceraldehyde-3-phosphate (G3P).</text>
</comment>
<comment type="catalytic activity">
    <reaction evidence="1">
        <text>D-glyceraldehyde 3-phosphate = dihydroxyacetone phosphate</text>
        <dbReference type="Rhea" id="RHEA:18585"/>
        <dbReference type="ChEBI" id="CHEBI:57642"/>
        <dbReference type="ChEBI" id="CHEBI:59776"/>
        <dbReference type="EC" id="5.3.1.1"/>
    </reaction>
</comment>
<comment type="pathway">
    <text evidence="1">Carbohydrate biosynthesis; gluconeogenesis.</text>
</comment>
<comment type="pathway">
    <text evidence="1">Carbohydrate degradation; glycolysis; D-glyceraldehyde 3-phosphate from glycerone phosphate: step 1/1.</text>
</comment>
<comment type="subunit">
    <text evidence="1">Homotetramer; dimer of dimers.</text>
</comment>
<comment type="subcellular location">
    <subcellularLocation>
        <location evidence="1">Cytoplasm</location>
    </subcellularLocation>
</comment>
<comment type="similarity">
    <text evidence="1">Belongs to the triosephosphate isomerase family.</text>
</comment>
<keyword id="KW-0963">Cytoplasm</keyword>
<keyword id="KW-0312">Gluconeogenesis</keyword>
<keyword id="KW-0324">Glycolysis</keyword>
<keyword id="KW-0413">Isomerase</keyword>
<keyword id="KW-1185">Reference proteome</keyword>
<evidence type="ECO:0000255" key="1">
    <source>
        <dbReference type="HAMAP-Rule" id="MF_00147"/>
    </source>
</evidence>
<sequence length="229" mass="23851">MLEDLELKDTPIVILNFKTYLESTGERALELASICGDVADETGVNMAVAPQHMDLHRVSDAVEIPVLAQHIDAVDAGGHTGSILAECARDAGAAGTLINHSEKRMQLADIEWVISRMKELEMMSVVCTNNVMTTAAAAALGPDFVAVEPPELIGSGIPVSRAEPEVITGSVDAVKKVNPEVSVLCGAGISTGDDMKAAVDLGAEGVLLASGIILADSPRDALLDLVSKV</sequence>
<reference key="1">
    <citation type="journal article" date="1997" name="J. Bacteriol.">
        <title>Complete genome sequence of Methanobacterium thermoautotrophicum deltaH: functional analysis and comparative genomics.</title>
        <authorList>
            <person name="Smith D.R."/>
            <person name="Doucette-Stamm L.A."/>
            <person name="Deloughery C."/>
            <person name="Lee H.-M."/>
            <person name="Dubois J."/>
            <person name="Aldredge T."/>
            <person name="Bashirzadeh R."/>
            <person name="Blakely D."/>
            <person name="Cook R."/>
            <person name="Gilbert K."/>
            <person name="Harrison D."/>
            <person name="Hoang L."/>
            <person name="Keagle P."/>
            <person name="Lumm W."/>
            <person name="Pothier B."/>
            <person name="Qiu D."/>
            <person name="Spadafora R."/>
            <person name="Vicare R."/>
            <person name="Wang Y."/>
            <person name="Wierzbowski J."/>
            <person name="Gibson R."/>
            <person name="Jiwani N."/>
            <person name="Caruso A."/>
            <person name="Bush D."/>
            <person name="Safer H."/>
            <person name="Patwell D."/>
            <person name="Prabhakar S."/>
            <person name="McDougall S."/>
            <person name="Shimer G."/>
            <person name="Goyal A."/>
            <person name="Pietrovski S."/>
            <person name="Church G.M."/>
            <person name="Daniels C.J."/>
            <person name="Mao J.-I."/>
            <person name="Rice P."/>
            <person name="Noelling J."/>
            <person name="Reeve J.N."/>
        </authorList>
    </citation>
    <scope>NUCLEOTIDE SEQUENCE [LARGE SCALE GENOMIC DNA]</scope>
    <source>
        <strain>ATCC 29096 / DSM 1053 / JCM 10044 / NBRC 100330 / Delta H</strain>
    </source>
</reference>
<organism>
    <name type="scientific">Methanothermobacter thermautotrophicus (strain ATCC 29096 / DSM 1053 / JCM 10044 / NBRC 100330 / Delta H)</name>
    <name type="common">Methanobacterium thermoautotrophicum</name>
    <dbReference type="NCBI Taxonomy" id="187420"/>
    <lineage>
        <taxon>Archaea</taxon>
        <taxon>Methanobacteriati</taxon>
        <taxon>Methanobacteriota</taxon>
        <taxon>Methanomada group</taxon>
        <taxon>Methanobacteria</taxon>
        <taxon>Methanobacteriales</taxon>
        <taxon>Methanobacteriaceae</taxon>
        <taxon>Methanothermobacter</taxon>
    </lineage>
</organism>
<protein>
    <recommendedName>
        <fullName evidence="1">Triosephosphate isomerase</fullName>
        <shortName evidence="1">TIM</shortName>
        <shortName evidence="1">TPI</shortName>
        <ecNumber evidence="1">5.3.1.1</ecNumber>
    </recommendedName>
    <alternativeName>
        <fullName evidence="1">Triose-phosphate isomerase</fullName>
    </alternativeName>
</protein>
<name>TPIS_METTH</name>
<dbReference type="EC" id="5.3.1.1" evidence="1"/>
<dbReference type="EMBL" id="AE000666">
    <property type="protein sequence ID" value="AAB85537.1"/>
    <property type="molecule type" value="Genomic_DNA"/>
</dbReference>
<dbReference type="PIR" id="A69006">
    <property type="entry name" value="A69006"/>
</dbReference>
<dbReference type="RefSeq" id="WP_010876672.1">
    <property type="nucleotide sequence ID" value="NC_000916.1"/>
</dbReference>
<dbReference type="SMR" id="O27120"/>
<dbReference type="FunCoup" id="O27120">
    <property type="interactions" value="246"/>
</dbReference>
<dbReference type="STRING" id="187420.MTH_1041"/>
<dbReference type="PaxDb" id="187420-MTH_1041"/>
<dbReference type="EnsemblBacteria" id="AAB85537">
    <property type="protein sequence ID" value="AAB85537"/>
    <property type="gene ID" value="MTH_1041"/>
</dbReference>
<dbReference type="GeneID" id="1471449"/>
<dbReference type="GeneID" id="77401572"/>
<dbReference type="KEGG" id="mth:MTH_1041"/>
<dbReference type="PATRIC" id="fig|187420.15.peg.1025"/>
<dbReference type="HOGENOM" id="CLU_104921_0_0_2"/>
<dbReference type="InParanoid" id="O27120"/>
<dbReference type="BioCyc" id="MetaCyc:MONOMER-14534"/>
<dbReference type="UniPathway" id="UPA00109">
    <property type="reaction ID" value="UER00189"/>
</dbReference>
<dbReference type="UniPathway" id="UPA00138"/>
<dbReference type="Proteomes" id="UP000005223">
    <property type="component" value="Chromosome"/>
</dbReference>
<dbReference type="GO" id="GO:0005737">
    <property type="term" value="C:cytoplasm"/>
    <property type="evidence" value="ECO:0007669"/>
    <property type="project" value="UniProtKB-SubCell"/>
</dbReference>
<dbReference type="GO" id="GO:0004807">
    <property type="term" value="F:triose-phosphate isomerase activity"/>
    <property type="evidence" value="ECO:0007669"/>
    <property type="project" value="UniProtKB-UniRule"/>
</dbReference>
<dbReference type="GO" id="GO:0006094">
    <property type="term" value="P:gluconeogenesis"/>
    <property type="evidence" value="ECO:0007669"/>
    <property type="project" value="UniProtKB-UniRule"/>
</dbReference>
<dbReference type="GO" id="GO:0006096">
    <property type="term" value="P:glycolytic process"/>
    <property type="evidence" value="ECO:0007669"/>
    <property type="project" value="UniProtKB-UniRule"/>
</dbReference>
<dbReference type="CDD" id="cd00311">
    <property type="entry name" value="TIM"/>
    <property type="match status" value="1"/>
</dbReference>
<dbReference type="FunFam" id="3.20.20.70:FF:000223">
    <property type="entry name" value="Triosephosphate isomerase"/>
    <property type="match status" value="1"/>
</dbReference>
<dbReference type="Gene3D" id="3.20.20.70">
    <property type="entry name" value="Aldolase class I"/>
    <property type="match status" value="1"/>
</dbReference>
<dbReference type="HAMAP" id="MF_00147_A">
    <property type="entry name" value="TIM_A"/>
    <property type="match status" value="1"/>
</dbReference>
<dbReference type="InterPro" id="IPR013785">
    <property type="entry name" value="Aldolase_TIM"/>
</dbReference>
<dbReference type="InterPro" id="IPR035990">
    <property type="entry name" value="TIM_sf"/>
</dbReference>
<dbReference type="InterPro" id="IPR000652">
    <property type="entry name" value="Triosephosphate_isomerase"/>
</dbReference>
<dbReference type="InterPro" id="IPR022891">
    <property type="entry name" value="Triosephosphate_isomerase_arc"/>
</dbReference>
<dbReference type="InterPro" id="IPR020861">
    <property type="entry name" value="Triosephosphate_isomerase_AS"/>
</dbReference>
<dbReference type="NCBIfam" id="NF003302">
    <property type="entry name" value="PRK04302.1"/>
    <property type="match status" value="1"/>
</dbReference>
<dbReference type="NCBIfam" id="TIGR00419">
    <property type="entry name" value="tim"/>
    <property type="match status" value="1"/>
</dbReference>
<dbReference type="Pfam" id="PF00121">
    <property type="entry name" value="TIM"/>
    <property type="match status" value="1"/>
</dbReference>
<dbReference type="SUPFAM" id="SSF51351">
    <property type="entry name" value="Triosephosphate isomerase (TIM)"/>
    <property type="match status" value="1"/>
</dbReference>
<dbReference type="PROSITE" id="PS00171">
    <property type="entry name" value="TIM_1"/>
    <property type="match status" value="1"/>
</dbReference>
<dbReference type="PROSITE" id="PS51440">
    <property type="entry name" value="TIM_2"/>
    <property type="match status" value="1"/>
</dbReference>
<accession>O27120</accession>
<feature type="chain" id="PRO_0000090338" description="Triosephosphate isomerase">
    <location>
        <begin position="1"/>
        <end position="229"/>
    </location>
</feature>
<feature type="active site" description="Electrophile" evidence="1">
    <location>
        <position position="100"/>
    </location>
</feature>
<feature type="active site" description="Proton acceptor" evidence="1">
    <location>
        <position position="148"/>
    </location>
</feature>
<feature type="binding site" evidence="1">
    <location>
        <begin position="16"/>
        <end position="18"/>
    </location>
    <ligand>
        <name>substrate</name>
    </ligand>
</feature>
<feature type="binding site" evidence="1">
    <location>
        <position position="153"/>
    </location>
    <ligand>
        <name>substrate</name>
    </ligand>
</feature>
<feature type="binding site" evidence="1">
    <location>
        <position position="188"/>
    </location>
    <ligand>
        <name>substrate</name>
    </ligand>
</feature>
<feature type="binding site" evidence="1">
    <location>
        <begin position="209"/>
        <end position="210"/>
    </location>
    <ligand>
        <name>substrate</name>
    </ligand>
</feature>